<protein>
    <recommendedName>
        <fullName evidence="1">Ribosomal RNA large subunit methyltransferase H</fullName>
        <ecNumber evidence="1">2.1.1.177</ecNumber>
    </recommendedName>
    <alternativeName>
        <fullName evidence="1">23S rRNA (pseudouridine1915-N3)-methyltransferase</fullName>
    </alternativeName>
    <alternativeName>
        <fullName evidence="1">23S rRNA m3Psi1915 methyltransferase</fullName>
    </alternativeName>
    <alternativeName>
        <fullName evidence="1">rRNA (pseudouridine-N3-)-methyltransferase RlmH</fullName>
    </alternativeName>
</protein>
<gene>
    <name evidence="1" type="primary">rlmH</name>
    <name type="ordered locus">Rru_A1235</name>
</gene>
<reference key="1">
    <citation type="journal article" date="2011" name="Stand. Genomic Sci.">
        <title>Complete genome sequence of Rhodospirillum rubrum type strain (S1).</title>
        <authorList>
            <person name="Munk A.C."/>
            <person name="Copeland A."/>
            <person name="Lucas S."/>
            <person name="Lapidus A."/>
            <person name="Del Rio T.G."/>
            <person name="Barry K."/>
            <person name="Detter J.C."/>
            <person name="Hammon N."/>
            <person name="Israni S."/>
            <person name="Pitluck S."/>
            <person name="Brettin T."/>
            <person name="Bruce D."/>
            <person name="Han C."/>
            <person name="Tapia R."/>
            <person name="Gilna P."/>
            <person name="Schmutz J."/>
            <person name="Larimer F."/>
            <person name="Land M."/>
            <person name="Kyrpides N.C."/>
            <person name="Mavromatis K."/>
            <person name="Richardson P."/>
            <person name="Rohde M."/>
            <person name="Goeker M."/>
            <person name="Klenk H.P."/>
            <person name="Zhang Y."/>
            <person name="Roberts G.P."/>
            <person name="Reslewic S."/>
            <person name="Schwartz D.C."/>
        </authorList>
    </citation>
    <scope>NUCLEOTIDE SEQUENCE [LARGE SCALE GENOMIC DNA]</scope>
    <source>
        <strain>ATCC 11170 / ATH 1.1.1 / DSM 467 / LMG 4362 / NCIMB 8255 / S1</strain>
    </source>
</reference>
<dbReference type="EC" id="2.1.1.177" evidence="1"/>
<dbReference type="EMBL" id="CP000230">
    <property type="protein sequence ID" value="ABC22036.1"/>
    <property type="molecule type" value="Genomic_DNA"/>
</dbReference>
<dbReference type="RefSeq" id="WP_011388990.1">
    <property type="nucleotide sequence ID" value="NC_007643.1"/>
</dbReference>
<dbReference type="RefSeq" id="YP_426323.1">
    <property type="nucleotide sequence ID" value="NC_007643.1"/>
</dbReference>
<dbReference type="SMR" id="Q2RV09"/>
<dbReference type="STRING" id="269796.Rru_A1235"/>
<dbReference type="EnsemblBacteria" id="ABC22036">
    <property type="protein sequence ID" value="ABC22036"/>
    <property type="gene ID" value="Rru_A1235"/>
</dbReference>
<dbReference type="KEGG" id="rru:Rru_A1235"/>
<dbReference type="PATRIC" id="fig|269796.9.peg.1300"/>
<dbReference type="eggNOG" id="COG1576">
    <property type="taxonomic scope" value="Bacteria"/>
</dbReference>
<dbReference type="HOGENOM" id="CLU_100552_1_1_5"/>
<dbReference type="PhylomeDB" id="Q2RV09"/>
<dbReference type="Proteomes" id="UP000001929">
    <property type="component" value="Chromosome"/>
</dbReference>
<dbReference type="GO" id="GO:0005737">
    <property type="term" value="C:cytoplasm"/>
    <property type="evidence" value="ECO:0007669"/>
    <property type="project" value="UniProtKB-SubCell"/>
</dbReference>
<dbReference type="GO" id="GO:0070038">
    <property type="term" value="F:rRNA (pseudouridine-N3-)-methyltransferase activity"/>
    <property type="evidence" value="ECO:0007669"/>
    <property type="project" value="UniProtKB-UniRule"/>
</dbReference>
<dbReference type="CDD" id="cd18081">
    <property type="entry name" value="RlmH-like"/>
    <property type="match status" value="1"/>
</dbReference>
<dbReference type="Gene3D" id="3.40.1280.10">
    <property type="match status" value="1"/>
</dbReference>
<dbReference type="HAMAP" id="MF_00658">
    <property type="entry name" value="23SrRNA_methyltr_H"/>
    <property type="match status" value="1"/>
</dbReference>
<dbReference type="InterPro" id="IPR029028">
    <property type="entry name" value="Alpha/beta_knot_MTases"/>
</dbReference>
<dbReference type="InterPro" id="IPR003742">
    <property type="entry name" value="RlmH-like"/>
</dbReference>
<dbReference type="InterPro" id="IPR029026">
    <property type="entry name" value="tRNA_m1G_MTases_N"/>
</dbReference>
<dbReference type="NCBIfam" id="NF000989">
    <property type="entry name" value="PRK00103.2-3"/>
    <property type="match status" value="1"/>
</dbReference>
<dbReference type="PANTHER" id="PTHR33603">
    <property type="entry name" value="METHYLTRANSFERASE"/>
    <property type="match status" value="1"/>
</dbReference>
<dbReference type="PANTHER" id="PTHR33603:SF1">
    <property type="entry name" value="RIBOSOMAL RNA LARGE SUBUNIT METHYLTRANSFERASE H"/>
    <property type="match status" value="1"/>
</dbReference>
<dbReference type="Pfam" id="PF02590">
    <property type="entry name" value="SPOUT_MTase"/>
    <property type="match status" value="1"/>
</dbReference>
<dbReference type="PIRSF" id="PIRSF004505">
    <property type="entry name" value="MT_bac"/>
    <property type="match status" value="1"/>
</dbReference>
<dbReference type="SUPFAM" id="SSF75217">
    <property type="entry name" value="alpha/beta knot"/>
    <property type="match status" value="1"/>
</dbReference>
<sequence>MKLLVAAVGRWRGGPERALFDHYVGRLKGGLAVIEVEERRPLPVAERKAREAELLLAQLPPGAFVVALDEHGEAWGSERLARELDQRRLEARPAAVFAIGGADGHGEALLARADRKLALGVMTWPHMLVRGLIAEQLYRAQCISGGHPYHRS</sequence>
<name>RLMH_RHORT</name>
<evidence type="ECO:0000255" key="1">
    <source>
        <dbReference type="HAMAP-Rule" id="MF_00658"/>
    </source>
</evidence>
<organism>
    <name type="scientific">Rhodospirillum rubrum (strain ATCC 11170 / ATH 1.1.1 / DSM 467 / LMG 4362 / NCIMB 8255 / S1)</name>
    <dbReference type="NCBI Taxonomy" id="269796"/>
    <lineage>
        <taxon>Bacteria</taxon>
        <taxon>Pseudomonadati</taxon>
        <taxon>Pseudomonadota</taxon>
        <taxon>Alphaproteobacteria</taxon>
        <taxon>Rhodospirillales</taxon>
        <taxon>Rhodospirillaceae</taxon>
        <taxon>Rhodospirillum</taxon>
    </lineage>
</organism>
<proteinExistence type="inferred from homology"/>
<accession>Q2RV09</accession>
<comment type="function">
    <text evidence="1">Specifically methylates the pseudouridine at position 1915 (m3Psi1915) in 23S rRNA.</text>
</comment>
<comment type="catalytic activity">
    <reaction evidence="1">
        <text>pseudouridine(1915) in 23S rRNA + S-adenosyl-L-methionine = N(3)-methylpseudouridine(1915) in 23S rRNA + S-adenosyl-L-homocysteine + H(+)</text>
        <dbReference type="Rhea" id="RHEA:42752"/>
        <dbReference type="Rhea" id="RHEA-COMP:10221"/>
        <dbReference type="Rhea" id="RHEA-COMP:10222"/>
        <dbReference type="ChEBI" id="CHEBI:15378"/>
        <dbReference type="ChEBI" id="CHEBI:57856"/>
        <dbReference type="ChEBI" id="CHEBI:59789"/>
        <dbReference type="ChEBI" id="CHEBI:65314"/>
        <dbReference type="ChEBI" id="CHEBI:74486"/>
        <dbReference type="EC" id="2.1.1.177"/>
    </reaction>
</comment>
<comment type="subunit">
    <text evidence="1">Homodimer.</text>
</comment>
<comment type="subcellular location">
    <subcellularLocation>
        <location evidence="1">Cytoplasm</location>
    </subcellularLocation>
</comment>
<comment type="similarity">
    <text evidence="1">Belongs to the RNA methyltransferase RlmH family.</text>
</comment>
<keyword id="KW-0963">Cytoplasm</keyword>
<keyword id="KW-0489">Methyltransferase</keyword>
<keyword id="KW-1185">Reference proteome</keyword>
<keyword id="KW-0698">rRNA processing</keyword>
<keyword id="KW-0949">S-adenosyl-L-methionine</keyword>
<keyword id="KW-0808">Transferase</keyword>
<feature type="chain" id="PRO_0000260600" description="Ribosomal RNA large subunit methyltransferase H">
    <location>
        <begin position="1"/>
        <end position="152"/>
    </location>
</feature>
<feature type="binding site" evidence="1">
    <location>
        <position position="68"/>
    </location>
    <ligand>
        <name>S-adenosyl-L-methionine</name>
        <dbReference type="ChEBI" id="CHEBI:59789"/>
    </ligand>
</feature>
<feature type="binding site" evidence="1">
    <location>
        <position position="100"/>
    </location>
    <ligand>
        <name>S-adenosyl-L-methionine</name>
        <dbReference type="ChEBI" id="CHEBI:59789"/>
    </ligand>
</feature>
<feature type="binding site" evidence="1">
    <location>
        <begin position="119"/>
        <end position="124"/>
    </location>
    <ligand>
        <name>S-adenosyl-L-methionine</name>
        <dbReference type="ChEBI" id="CHEBI:59789"/>
    </ligand>
</feature>